<dbReference type="EMBL" id="AJ537425">
    <property type="protein sequence ID" value="CAD60935.1"/>
    <property type="molecule type" value="mRNA"/>
</dbReference>
<dbReference type="EMBL" id="U08338">
    <property type="protein sequence ID" value="AAA18779.1"/>
    <property type="molecule type" value="Unassigned_DNA"/>
</dbReference>
<dbReference type="CCDS" id="CCDS17960.1"/>
<dbReference type="PIR" id="S43295">
    <property type="entry name" value="S43295"/>
</dbReference>
<dbReference type="RefSeq" id="NP_038554.1">
    <property type="nucleotide sequence ID" value="NM_013526.1"/>
</dbReference>
<dbReference type="SMR" id="P43028"/>
<dbReference type="FunCoup" id="P43028">
    <property type="interactions" value="879"/>
</dbReference>
<dbReference type="STRING" id="10090.ENSMUSP00000062884"/>
<dbReference type="GlyCosmos" id="P43028">
    <property type="glycosylation" value="1 site, No reported glycans"/>
</dbReference>
<dbReference type="GlyGen" id="P43028">
    <property type="glycosylation" value="4 sites"/>
</dbReference>
<dbReference type="iPTMnet" id="P43028"/>
<dbReference type="PhosphoSitePlus" id="P43028"/>
<dbReference type="PaxDb" id="10090-ENSMUSP00000062884"/>
<dbReference type="ProteomicsDB" id="267787"/>
<dbReference type="Antibodypedia" id="25942">
    <property type="antibodies" value="163 antibodies from 29 providers"/>
</dbReference>
<dbReference type="DNASU" id="242316"/>
<dbReference type="Ensembl" id="ENSMUST00000057613.3">
    <property type="protein sequence ID" value="ENSMUSP00000062884.3"/>
    <property type="gene ID" value="ENSMUSG00000051279.3"/>
</dbReference>
<dbReference type="GeneID" id="242316"/>
<dbReference type="KEGG" id="mmu:242316"/>
<dbReference type="UCSC" id="uc008ryt.1">
    <property type="organism name" value="mouse"/>
</dbReference>
<dbReference type="AGR" id="MGI:95689"/>
<dbReference type="CTD" id="392255"/>
<dbReference type="MGI" id="MGI:95689">
    <property type="gene designation" value="Gdf6"/>
</dbReference>
<dbReference type="VEuPathDB" id="HostDB:ENSMUSG00000051279"/>
<dbReference type="eggNOG" id="KOG3900">
    <property type="taxonomic scope" value="Eukaryota"/>
</dbReference>
<dbReference type="GeneTree" id="ENSGT00940000162274"/>
<dbReference type="HOGENOM" id="CLU_020515_0_0_1"/>
<dbReference type="InParanoid" id="P43028"/>
<dbReference type="OMA" id="KKSKYRC"/>
<dbReference type="OrthoDB" id="5987191at2759"/>
<dbReference type="PhylomeDB" id="P43028"/>
<dbReference type="TreeFam" id="TF316134"/>
<dbReference type="BioGRID-ORCS" id="242316">
    <property type="hits" value="1 hit in 76 CRISPR screens"/>
</dbReference>
<dbReference type="PRO" id="PR:P43028"/>
<dbReference type="Proteomes" id="UP000000589">
    <property type="component" value="Chromosome 4"/>
</dbReference>
<dbReference type="RNAct" id="P43028">
    <property type="molecule type" value="protein"/>
</dbReference>
<dbReference type="Bgee" id="ENSMUSG00000051279">
    <property type="expression patterns" value="Expressed in auditory ossicle bone and 53 other cell types or tissues"/>
</dbReference>
<dbReference type="ExpressionAtlas" id="P43028">
    <property type="expression patterns" value="baseline and differential"/>
</dbReference>
<dbReference type="GO" id="GO:0005615">
    <property type="term" value="C:extracellular space"/>
    <property type="evidence" value="ECO:0007005"/>
    <property type="project" value="BHF-UCL"/>
</dbReference>
<dbReference type="GO" id="GO:0005125">
    <property type="term" value="F:cytokine activity"/>
    <property type="evidence" value="ECO:0007669"/>
    <property type="project" value="UniProtKB-KW"/>
</dbReference>
<dbReference type="GO" id="GO:0008083">
    <property type="term" value="F:growth factor activity"/>
    <property type="evidence" value="ECO:0007669"/>
    <property type="project" value="UniProtKB-KW"/>
</dbReference>
<dbReference type="GO" id="GO:0042802">
    <property type="term" value="F:identical protein binding"/>
    <property type="evidence" value="ECO:0000353"/>
    <property type="project" value="MGI"/>
</dbReference>
<dbReference type="GO" id="GO:0048018">
    <property type="term" value="F:receptor ligand activity"/>
    <property type="evidence" value="ECO:0000304"/>
    <property type="project" value="MGI"/>
</dbReference>
<dbReference type="GO" id="GO:0032924">
    <property type="term" value="P:activin receptor signaling pathway"/>
    <property type="evidence" value="ECO:0007669"/>
    <property type="project" value="Ensembl"/>
</dbReference>
<dbReference type="GO" id="GO:0006915">
    <property type="term" value="P:apoptotic process"/>
    <property type="evidence" value="ECO:0000250"/>
    <property type="project" value="UniProtKB"/>
</dbReference>
<dbReference type="GO" id="GO:0030509">
    <property type="term" value="P:BMP signaling pathway"/>
    <property type="evidence" value="ECO:0000314"/>
    <property type="project" value="MGI"/>
</dbReference>
<dbReference type="GO" id="GO:0035788">
    <property type="term" value="P:cell migration involved in metanephros development"/>
    <property type="evidence" value="ECO:0000315"/>
    <property type="project" value="MGI"/>
</dbReference>
<dbReference type="GO" id="GO:0010631">
    <property type="term" value="P:epithelial cell migration"/>
    <property type="evidence" value="ECO:0000315"/>
    <property type="project" value="MGI"/>
</dbReference>
<dbReference type="GO" id="GO:0045444">
    <property type="term" value="P:fat cell differentiation"/>
    <property type="evidence" value="ECO:0000315"/>
    <property type="project" value="UniProtKB"/>
</dbReference>
<dbReference type="GO" id="GO:0072170">
    <property type="term" value="P:metanephric tubule development"/>
    <property type="evidence" value="ECO:0000266"/>
    <property type="project" value="MGI"/>
</dbReference>
<dbReference type="GO" id="GO:0001656">
    <property type="term" value="P:metanephros development"/>
    <property type="evidence" value="ECO:0000315"/>
    <property type="project" value="MGI"/>
</dbReference>
<dbReference type="GO" id="GO:0032332">
    <property type="term" value="P:positive regulation of chondrocyte differentiation"/>
    <property type="evidence" value="ECO:0000250"/>
    <property type="project" value="UniProtKB"/>
</dbReference>
<dbReference type="GO" id="GO:0045893">
    <property type="term" value="P:positive regulation of DNA-templated transcription"/>
    <property type="evidence" value="ECO:0007669"/>
    <property type="project" value="Ensembl"/>
</dbReference>
<dbReference type="GO" id="GO:0045666">
    <property type="term" value="P:positive regulation of neuron differentiation"/>
    <property type="evidence" value="ECO:0000314"/>
    <property type="project" value="MGI"/>
</dbReference>
<dbReference type="GO" id="GO:1900745">
    <property type="term" value="P:positive regulation of p38MAPK cascade"/>
    <property type="evidence" value="ECO:0000315"/>
    <property type="project" value="UniProtKB"/>
</dbReference>
<dbReference type="GO" id="GO:0060391">
    <property type="term" value="P:positive regulation of SMAD protein signal transduction"/>
    <property type="evidence" value="ECO:0000315"/>
    <property type="project" value="UniProtKB"/>
</dbReference>
<dbReference type="GO" id="GO:1990009">
    <property type="term" value="P:retinal cell apoptotic process"/>
    <property type="evidence" value="ECO:0000250"/>
    <property type="project" value="UniProtKB"/>
</dbReference>
<dbReference type="CDD" id="cd13766">
    <property type="entry name" value="TGF_beta_GDF5_6_7"/>
    <property type="match status" value="1"/>
</dbReference>
<dbReference type="FunFam" id="2.10.90.10:FF:000001">
    <property type="entry name" value="Bone morphogenetic protein 4"/>
    <property type="match status" value="1"/>
</dbReference>
<dbReference type="FunFam" id="2.60.120.970:FF:000026">
    <property type="entry name" value="Growth differentiation factor 6"/>
    <property type="match status" value="1"/>
</dbReference>
<dbReference type="Gene3D" id="2.60.120.970">
    <property type="match status" value="1"/>
</dbReference>
<dbReference type="Gene3D" id="2.10.90.10">
    <property type="entry name" value="Cystine-knot cytokines"/>
    <property type="match status" value="1"/>
</dbReference>
<dbReference type="InterPro" id="IPR029034">
    <property type="entry name" value="Cystine-knot_cytokine"/>
</dbReference>
<dbReference type="InterPro" id="IPR001839">
    <property type="entry name" value="TGF-b_C"/>
</dbReference>
<dbReference type="InterPro" id="IPR001111">
    <property type="entry name" value="TGF-b_propeptide"/>
</dbReference>
<dbReference type="InterPro" id="IPR015615">
    <property type="entry name" value="TGF-beta-rel"/>
</dbReference>
<dbReference type="InterPro" id="IPR017948">
    <property type="entry name" value="TGFb_CS"/>
</dbReference>
<dbReference type="PANTHER" id="PTHR11848:SF43">
    <property type="entry name" value="GROWTH_DIFFERENTIATION FACTOR 6"/>
    <property type="match status" value="1"/>
</dbReference>
<dbReference type="PANTHER" id="PTHR11848">
    <property type="entry name" value="TGF-BETA FAMILY"/>
    <property type="match status" value="1"/>
</dbReference>
<dbReference type="Pfam" id="PF00019">
    <property type="entry name" value="TGF_beta"/>
    <property type="match status" value="1"/>
</dbReference>
<dbReference type="Pfam" id="PF00688">
    <property type="entry name" value="TGFb_propeptide"/>
    <property type="match status" value="1"/>
</dbReference>
<dbReference type="PRINTS" id="PR00669">
    <property type="entry name" value="INHIBINA"/>
</dbReference>
<dbReference type="SMART" id="SM00204">
    <property type="entry name" value="TGFB"/>
    <property type="match status" value="1"/>
</dbReference>
<dbReference type="SUPFAM" id="SSF57501">
    <property type="entry name" value="Cystine-knot cytokines"/>
    <property type="match status" value="1"/>
</dbReference>
<dbReference type="PROSITE" id="PS00250">
    <property type="entry name" value="TGF_BETA_1"/>
    <property type="match status" value="1"/>
</dbReference>
<dbReference type="PROSITE" id="PS51362">
    <property type="entry name" value="TGF_BETA_2"/>
    <property type="match status" value="1"/>
</dbReference>
<feature type="signal peptide" evidence="3">
    <location>
        <begin position="1"/>
        <end position="22"/>
    </location>
</feature>
<feature type="propeptide" id="PRO_0000342207" evidence="3">
    <location>
        <begin position="23"/>
        <end position="334"/>
    </location>
</feature>
<feature type="chain" id="PRO_0000033919" description="Growth/differentiation factor 6">
    <location>
        <begin position="335"/>
        <end position="454"/>
    </location>
</feature>
<feature type="region of interest" description="Disordered" evidence="4">
    <location>
        <begin position="28"/>
        <end position="93"/>
    </location>
</feature>
<feature type="region of interest" description="Disordered" evidence="4">
    <location>
        <begin position="247"/>
        <end position="268"/>
    </location>
</feature>
<feature type="region of interest" description="Disordered" evidence="4">
    <location>
        <begin position="303"/>
        <end position="350"/>
    </location>
</feature>
<feature type="compositionally biased region" description="Basic and acidic residues" evidence="4">
    <location>
        <begin position="39"/>
        <end position="52"/>
    </location>
</feature>
<feature type="compositionally biased region" description="Basic and acidic residues" evidence="4">
    <location>
        <begin position="60"/>
        <end position="73"/>
    </location>
</feature>
<feature type="compositionally biased region" description="Low complexity" evidence="4">
    <location>
        <begin position="81"/>
        <end position="92"/>
    </location>
</feature>
<feature type="compositionally biased region" description="Low complexity" evidence="4">
    <location>
        <begin position="303"/>
        <end position="319"/>
    </location>
</feature>
<feature type="compositionally biased region" description="Basic residues" evidence="4">
    <location>
        <begin position="329"/>
        <end position="350"/>
    </location>
</feature>
<feature type="glycosylation site" description="N-linked (GlcNAc...) asparagine" evidence="3">
    <location>
        <position position="117"/>
    </location>
</feature>
<feature type="disulfide bond" evidence="1">
    <location>
        <begin position="353"/>
        <end position="419"/>
    </location>
</feature>
<feature type="disulfide bond" evidence="1">
    <location>
        <begin position="382"/>
        <end position="451"/>
    </location>
</feature>
<feature type="disulfide bond" evidence="1">
    <location>
        <begin position="386"/>
        <end position="453"/>
    </location>
</feature>
<feature type="disulfide bond" description="Interchain" evidence="1">
    <location>
        <position position="418"/>
    </location>
</feature>
<protein>
    <recommendedName>
        <fullName>Growth/differentiation factor 6</fullName>
        <shortName>GDF-6</shortName>
    </recommendedName>
    <alternativeName>
        <fullName>Bone morphogenetic protein 13</fullName>
        <shortName>BMP-13</shortName>
    </alternativeName>
    <alternativeName>
        <fullName>Growth/differentiation factor 16</fullName>
    </alternativeName>
</protein>
<comment type="function">
    <text evidence="5 6 7 8 10">Growth factor that controls proliferation and cellular differentiation in the retina and bone formation. Plays a key role in regulating apoptosis during retinal development. Establishes dorsal-ventral positional information in the retina and controls the formation of the retinotectal map (PubMed:23307924). Required for normal formation of bones and joints in the limbs, skull, digits and axial skeleton. Plays a key role in establishing boundaries between skeletal elements during development. Regulation of GDF6 expression seems to be a mechanism for evolving species-specific changes in skeletal structures (PubMed:26774823). Seems to positively regulate differentiation of chondrogenic tissue through the growth factor receptors subunits BMPR1A, BMPR1B, BMPR2 and ACVR2A, leading to the activation of SMAD1-SMAD5-SMAD8 complex. The regulation of chondrogenic differentiation is inhibited by NOG (PubMed:12606286, PubMed:16049014). Also involved in the induction of adipogenesis from mesenchymal stem cells. This mechanism acts through the growth factor receptors subunits BMPR1A, BMPR2 and ACVR2A and the activation of SMAD1-SMAD5-SMAD8 complex and MAPK14/p38 (PubMed:23527555).</text>
</comment>
<comment type="subunit">
    <text evidence="1">Homodimer; disulfide-linked.</text>
</comment>
<comment type="subcellular location">
    <subcellularLocation>
        <location evidence="2">Secreted</location>
    </subcellularLocation>
</comment>
<comment type="tissue specificity">
    <text evidence="5 11">Expressed in different subsets of developing joints. Highly expressed in the cochlea (PubMed:32369452).</text>
</comment>
<comment type="induction">
    <text evidence="9">Strongly up-regulated in tibialis anterior muscles after denervation.</text>
</comment>
<comment type="disruption phenotype">
    <text evidence="7 10 11">Mice lacking GDF6 display photoreceptor degeneration. Animals exhibit abnormal electroretinograms with up to 66% decreases in the bipolar cell-driven b-wave and 54% decreases in the photoreceptor-mediated a-wave amplitudes, as well as 3 to 27% reduced photopic flicker fusion. The lengths, but not the widths, of dermal flat bones in the skull and the digits are significantly shorter than in wild type (PubMed:26774823). GDF6-knockout mice also shows cochlear aplasia, while the vestibular anatomy is normal (PubMed:32369452).</text>
</comment>
<comment type="similarity">
    <text evidence="12">Belongs to the TGF-beta family.</text>
</comment>
<organism>
    <name type="scientific">Mus musculus</name>
    <name type="common">Mouse</name>
    <dbReference type="NCBI Taxonomy" id="10090"/>
    <lineage>
        <taxon>Eukaryota</taxon>
        <taxon>Metazoa</taxon>
        <taxon>Chordata</taxon>
        <taxon>Craniata</taxon>
        <taxon>Vertebrata</taxon>
        <taxon>Euteleostomi</taxon>
        <taxon>Mammalia</taxon>
        <taxon>Eutheria</taxon>
        <taxon>Euarchontoglires</taxon>
        <taxon>Glires</taxon>
        <taxon>Rodentia</taxon>
        <taxon>Myomorpha</taxon>
        <taxon>Muroidea</taxon>
        <taxon>Muridae</taxon>
        <taxon>Murinae</taxon>
        <taxon>Mus</taxon>
        <taxon>Mus</taxon>
    </lineage>
</organism>
<gene>
    <name type="primary">Gdf6</name>
    <name type="synonym">Bmp13</name>
    <name type="synonym">Gdf-6</name>
    <name type="synonym">Gdf16</name>
</gene>
<keyword id="KW-0053">Apoptosis</keyword>
<keyword id="KW-0165">Cleavage on pair of basic residues</keyword>
<keyword id="KW-0202">Cytokine</keyword>
<keyword id="KW-0217">Developmental protein</keyword>
<keyword id="KW-1015">Disulfide bond</keyword>
<keyword id="KW-0325">Glycoprotein</keyword>
<keyword id="KW-0339">Growth factor</keyword>
<keyword id="KW-1185">Reference proteome</keyword>
<keyword id="KW-0964">Secreted</keyword>
<keyword id="KW-0732">Signal</keyword>
<proteinExistence type="evidence at transcript level"/>
<accession>P43028</accession>
<accession>Q70UT4</accession>
<name>GDF6_MOUSE</name>
<reference key="1">
    <citation type="submission" date="2003-01" db="EMBL/GenBank/DDBJ databases">
        <title>Cloning of human GDF16 and functional associated analysis.</title>
        <authorList>
            <person name="Guo J.H."/>
        </authorList>
    </citation>
    <scope>NUCLEOTIDE SEQUENCE [MRNA]</scope>
    <source>
        <strain>Kunming</strain>
        <tissue>Brain</tissue>
    </source>
</reference>
<reference key="2">
    <citation type="journal article" date="1994" name="Nature">
        <title>Limb alterations in brachypodism mice due to mutations in a new member of the TGF beta-superfamily.</title>
        <authorList>
            <person name="Storm E.E."/>
            <person name="Huynh T.V."/>
            <person name="Copeland N.G."/>
            <person name="Jenkins N.A."/>
            <person name="Kingsley D.M."/>
            <person name="Lee S.-J."/>
        </authorList>
    </citation>
    <scope>NUCLEOTIDE SEQUENCE [MRNA] OF 330-454</scope>
    <source>
        <strain>BALB/cJ</strain>
        <tissue>Liver</tissue>
    </source>
</reference>
<reference key="3">
    <citation type="journal article" date="2003" name="Dev. Biol.">
        <title>Multiple joint and skeletal patterning defects caused by single and double mutations in the mouse Gdf6 and Gdf5 genes.</title>
        <authorList>
            <person name="Settle S.H. Jr."/>
            <person name="Rountree R.B."/>
            <person name="Sinha A."/>
            <person name="Thacker A."/>
            <person name="Higgins K."/>
            <person name="Kingsley D.M."/>
        </authorList>
    </citation>
    <scope>FUNCTION</scope>
    <scope>TISSUE SPECIFICITY</scope>
</reference>
<reference key="4">
    <citation type="journal article" date="2005" name="J. Biol. Chem.">
        <title>Identification of receptors and signaling pathways for orphan bone morphogenetic protein/growth differentiation factor ligands based on genomic analyses.</title>
        <authorList>
            <person name="Mazerbourg S."/>
            <person name="Sangkuhl K."/>
            <person name="Luo C.-W."/>
            <person name="Sudo S."/>
            <person name="Klein C."/>
            <person name="Hsueh A.J.W."/>
        </authorList>
    </citation>
    <scope>FUNCTION</scope>
    <scope>IDENTIFICATION OF RECEPTORS</scope>
</reference>
<reference key="5">
    <citation type="journal article" date="2013" name="FEBS J.">
        <title>Gdf6 induces commitment of pluripotent mesenchymal C3H10T1/2 cells to the adipocyte lineage.</title>
        <authorList>
            <person name="Wang S.S."/>
            <person name="Huang H.Y."/>
            <person name="Chen S.Z."/>
            <person name="Li X."/>
            <person name="Zhang W.T."/>
            <person name="Tang Q.Q."/>
        </authorList>
    </citation>
    <scope>FUNCTION</scope>
</reference>
<reference key="6">
    <citation type="journal article" date="2013" name="Hum. Mol. Genet.">
        <title>Contribution of growth differentiation factor 6-dependent cell survival to early-onset retinal dystrophies.</title>
        <authorList>
            <person name="Asai-Coakwell M."/>
            <person name="March L."/>
            <person name="Dai X.H."/>
            <person name="Duval M."/>
            <person name="Lopez I."/>
            <person name="French C.R."/>
            <person name="Famulski J."/>
            <person name="De Baere E."/>
            <person name="Francis P.J."/>
            <person name="Sundaresan P."/>
            <person name="Sauve Y."/>
            <person name="Koenekoop R.K."/>
            <person name="Berry F.B."/>
            <person name="Allison W.T."/>
            <person name="Waskiewicz A.J."/>
            <person name="Lehmann O.J."/>
        </authorList>
    </citation>
    <scope>FUNCTION</scope>
    <scope>DISRUPTION PHENOTYPE</scope>
</reference>
<reference key="7">
    <citation type="journal article" date="2013" name="Nat. Genet.">
        <title>BMP signaling controls muscle mass.</title>
        <authorList>
            <person name="Sartori R."/>
            <person name="Schirwis E."/>
            <person name="Blaauw B."/>
            <person name="Bortolanza S."/>
            <person name="Zhao J."/>
            <person name="Enzo E."/>
            <person name="Stantzou A."/>
            <person name="Mouisel E."/>
            <person name="Toniolo L."/>
            <person name="Ferry A."/>
            <person name="Stricker S."/>
            <person name="Goldberg A.L."/>
            <person name="Dupont S."/>
            <person name="Piccolo S."/>
            <person name="Amthor H."/>
            <person name="Sandri M."/>
        </authorList>
    </citation>
    <scope>INDUCTION</scope>
</reference>
<reference key="8">
    <citation type="journal article" date="2016" name="Cell">
        <title>Evolving new skeletal traits by cis-regulatory changes in bone morphogenetic proteins.</title>
        <authorList>
            <person name="Indjeian V.B."/>
            <person name="Kingman G.A."/>
            <person name="Jones F.C."/>
            <person name="Guenther C.A."/>
            <person name="Grimwood J."/>
            <person name="Schmutz J."/>
            <person name="Myers R.M."/>
            <person name="Kingsley D.M."/>
        </authorList>
    </citation>
    <scope>FUNCTION</scope>
    <scope>DISRUPTION PHENOTYPE</scope>
</reference>
<reference key="9">
    <citation type="journal article" date="2020" name="J. Clin. Invest.">
        <title>Long-range cis-regulatory elements controlling GDF6 expression are essential for ear development.</title>
        <authorList>
            <person name="Bademci G."/>
            <person name="Abad C."/>
            <person name="Cengiz F.B."/>
            <person name="Seyhan S."/>
            <person name="Incesulu A."/>
            <person name="Guo S."/>
            <person name="Fitoz S."/>
            <person name="Atli E.I."/>
            <person name="Gosstola N.C."/>
            <person name="Demir S."/>
            <person name="Colbert B.M."/>
            <person name="Seyhan G.C."/>
            <person name="Sineni C.J."/>
            <person name="Duman D."/>
            <person name="Gurkan H."/>
            <person name="Morton C.C."/>
            <person name="Dykxhoorn D.M."/>
            <person name="Walz K."/>
            <person name="Tekin M."/>
        </authorList>
    </citation>
    <scope>TISSUE SPECIFICITY</scope>
    <scope>DISRUPTION PHENOTYPE</scope>
</reference>
<sequence length="454" mass="50942">MDTPRVLLWAIFLISFLWDLPGFQQASISSSSSSSTELDSTKDVGNRKEGKMQRTPQESAEGRTPPEHGLRQKDLRRRPPGQHQGQEPPGRGLRVVPHEYMLSIYKTYSIAEKLGINASFFQSSKSANTITSFVDRGLDDLSHTPLRRQKYLFDVSTLSDKEELVGAELRLYRQAPPTPWGLPARPLHLQLFPCLSPLLLDARTLDPQGPTQAGWEVFDVWQGLRPQPWKQLCLELRAAWGELDAGDTGARARGPQQPPPLDLRSLGFGRRVRPPQERALLVVFTRSQRKNLFTEMHEQLGSAEAAGAEGSWPAPSGSPDAGSWLPSPGRRRRRTAFASRHGKRHGKKSRLRCSRKPLHVNFKELGWDDWIIAPLEYEAYHCEGVCDFPLRSHLEPTNHAIIQTLMNSMDPGSTPPSCCVPTKLTPISILYIDAGNNVVYKQYEDMVVESCGCR</sequence>
<evidence type="ECO:0000250" key="1">
    <source>
        <dbReference type="UniProtKB" id="P39905"/>
    </source>
</evidence>
<evidence type="ECO:0000250" key="2">
    <source>
        <dbReference type="UniProtKB" id="Q6KF10"/>
    </source>
</evidence>
<evidence type="ECO:0000255" key="3"/>
<evidence type="ECO:0000256" key="4">
    <source>
        <dbReference type="SAM" id="MobiDB-lite"/>
    </source>
</evidence>
<evidence type="ECO:0000269" key="5">
    <source>
    </source>
</evidence>
<evidence type="ECO:0000269" key="6">
    <source>
    </source>
</evidence>
<evidence type="ECO:0000269" key="7">
    <source>
    </source>
</evidence>
<evidence type="ECO:0000269" key="8">
    <source>
    </source>
</evidence>
<evidence type="ECO:0000269" key="9">
    <source>
    </source>
</evidence>
<evidence type="ECO:0000269" key="10">
    <source>
    </source>
</evidence>
<evidence type="ECO:0000269" key="11">
    <source>
    </source>
</evidence>
<evidence type="ECO:0000305" key="12"/>